<accession>O33289</accession>
<accession>F2GPH5</accession>
<accession>L0TAR8</accession>
<sequence length="174" mass="19589">MTERPRDCRPVVRRARTSDVPAIKQLVDTYAGKILLEKNLVTLYEAVQEFWVAEHPDLYGKVVGCGALHVLWSDLGEIRTVAVDPAMTGHGIGHAIVDRLLQVARDLQLQRVFVLTFETEFFARHGFTEIEGTPVTAEVFDEMCRSYDIGVAEFLDLSYVKPNILGNSRMLLVL</sequence>
<dbReference type="EC" id="2.3.1.1"/>
<dbReference type="EMBL" id="AL123456">
    <property type="protein sequence ID" value="CCP45546.1"/>
    <property type="molecule type" value="Genomic_DNA"/>
</dbReference>
<dbReference type="PIR" id="B70879">
    <property type="entry name" value="B70879"/>
</dbReference>
<dbReference type="RefSeq" id="NP_217263.1">
    <property type="nucleotide sequence ID" value="NC_000962.3"/>
</dbReference>
<dbReference type="RefSeq" id="WP_003414037.1">
    <property type="nucleotide sequence ID" value="NZ_NVQJ01000020.1"/>
</dbReference>
<dbReference type="PDB" id="5YGE">
    <property type="method" value="X-ray"/>
    <property type="resolution" value="2.04 A"/>
    <property type="chains" value="A/B=2-174"/>
</dbReference>
<dbReference type="PDB" id="5YO2">
    <property type="method" value="X-ray"/>
    <property type="resolution" value="3.00 A"/>
    <property type="chains" value="A/B=1-174"/>
</dbReference>
<dbReference type="PDB" id="6ADD">
    <property type="method" value="X-ray"/>
    <property type="resolution" value="2.30 A"/>
    <property type="chains" value="A/B=1-174"/>
</dbReference>
<dbReference type="PDBsum" id="5YGE"/>
<dbReference type="PDBsum" id="5YO2"/>
<dbReference type="PDBsum" id="6ADD"/>
<dbReference type="SMR" id="O33289"/>
<dbReference type="FunCoup" id="O33289">
    <property type="interactions" value="115"/>
</dbReference>
<dbReference type="STRING" id="83332.Rv2747"/>
<dbReference type="PaxDb" id="83332-Rv2747"/>
<dbReference type="DNASU" id="888407"/>
<dbReference type="GeneID" id="888407"/>
<dbReference type="KEGG" id="mtu:Rv2747"/>
<dbReference type="KEGG" id="mtv:RVBD_2747"/>
<dbReference type="TubercuList" id="Rv2747"/>
<dbReference type="eggNOG" id="COG1246">
    <property type="taxonomic scope" value="Bacteria"/>
</dbReference>
<dbReference type="InParanoid" id="O33289"/>
<dbReference type="OrthoDB" id="9793138at2"/>
<dbReference type="PhylomeDB" id="O33289"/>
<dbReference type="BRENDA" id="2.3.1.1">
    <property type="organism ID" value="3445"/>
</dbReference>
<dbReference type="SABIO-RK" id="O33289"/>
<dbReference type="UniPathway" id="UPA00068">
    <property type="reaction ID" value="UER00106"/>
</dbReference>
<dbReference type="Proteomes" id="UP000001584">
    <property type="component" value="Chromosome"/>
</dbReference>
<dbReference type="GO" id="GO:0005737">
    <property type="term" value="C:cytoplasm"/>
    <property type="evidence" value="ECO:0000318"/>
    <property type="project" value="GO_Central"/>
</dbReference>
<dbReference type="GO" id="GO:0004042">
    <property type="term" value="F:L-glutamate N-acetyltransferase activity"/>
    <property type="evidence" value="ECO:0000314"/>
    <property type="project" value="MTBBASE"/>
</dbReference>
<dbReference type="GO" id="GO:0008080">
    <property type="term" value="F:N-acetyltransferase activity"/>
    <property type="evidence" value="ECO:0000318"/>
    <property type="project" value="GO_Central"/>
</dbReference>
<dbReference type="GO" id="GO:0042803">
    <property type="term" value="F:protein homodimerization activity"/>
    <property type="evidence" value="ECO:0000353"/>
    <property type="project" value="MTBBASE"/>
</dbReference>
<dbReference type="GO" id="GO:0042450">
    <property type="term" value="P:arginine biosynthetic process via ornithine"/>
    <property type="evidence" value="ECO:0000314"/>
    <property type="project" value="MTBBASE"/>
</dbReference>
<dbReference type="GO" id="GO:0006526">
    <property type="term" value="P:L-arginine biosynthetic process"/>
    <property type="evidence" value="ECO:0007669"/>
    <property type="project" value="UniProtKB-UniPathway"/>
</dbReference>
<dbReference type="GO" id="GO:0051289">
    <property type="term" value="P:protein homotetramerization"/>
    <property type="evidence" value="ECO:0000353"/>
    <property type="project" value="MTBBASE"/>
</dbReference>
<dbReference type="CDD" id="cd04301">
    <property type="entry name" value="NAT_SF"/>
    <property type="match status" value="1"/>
</dbReference>
<dbReference type="FunFam" id="3.40.630.30:FF:000169">
    <property type="entry name" value="N-acetylglutamate synthase"/>
    <property type="match status" value="1"/>
</dbReference>
<dbReference type="Gene3D" id="3.40.630.30">
    <property type="match status" value="1"/>
</dbReference>
<dbReference type="InterPro" id="IPR016181">
    <property type="entry name" value="Acyl_CoA_acyltransferase"/>
</dbReference>
<dbReference type="InterPro" id="IPR000182">
    <property type="entry name" value="GNAT_dom"/>
</dbReference>
<dbReference type="InterPro" id="IPR045039">
    <property type="entry name" value="NSI-like"/>
</dbReference>
<dbReference type="NCBIfam" id="NF005921">
    <property type="entry name" value="PRK07922.1"/>
    <property type="match status" value="1"/>
</dbReference>
<dbReference type="PANTHER" id="PTHR43626">
    <property type="entry name" value="ACYL-COA N-ACYLTRANSFERASE"/>
    <property type="match status" value="1"/>
</dbReference>
<dbReference type="PANTHER" id="PTHR43626:SF4">
    <property type="entry name" value="GCN5-RELATED N-ACETYLTRANSFERASE 2, CHLOROPLASTIC"/>
    <property type="match status" value="1"/>
</dbReference>
<dbReference type="Pfam" id="PF00583">
    <property type="entry name" value="Acetyltransf_1"/>
    <property type="match status" value="1"/>
</dbReference>
<dbReference type="SUPFAM" id="SSF55729">
    <property type="entry name" value="Acyl-CoA N-acyltransferases (Nat)"/>
    <property type="match status" value="1"/>
</dbReference>
<dbReference type="PROSITE" id="PS51186">
    <property type="entry name" value="GNAT"/>
    <property type="match status" value="1"/>
</dbReference>
<evidence type="ECO:0000255" key="1">
    <source>
        <dbReference type="PROSITE-ProRule" id="PRU00532"/>
    </source>
</evidence>
<evidence type="ECO:0000269" key="2">
    <source>
    </source>
</evidence>
<evidence type="ECO:0000305" key="3"/>
<evidence type="ECO:0007829" key="4">
    <source>
        <dbReference type="PDB" id="5YGE"/>
    </source>
</evidence>
<evidence type="ECO:0007829" key="5">
    <source>
        <dbReference type="PDB" id="6ADD"/>
    </source>
</evidence>
<name>ARGA_MYCTU</name>
<gene>
    <name type="primary">argA</name>
    <name type="ordered locus">Rv2747</name>
</gene>
<feature type="chain" id="PRO_0000420585" description="Amino-acid acetyltransferase">
    <location>
        <begin position="1"/>
        <end position="174"/>
    </location>
</feature>
<feature type="domain" description="N-acetyltransferase" evidence="1">
    <location>
        <begin position="10"/>
        <end position="148"/>
    </location>
</feature>
<feature type="strand" evidence="4">
    <location>
        <begin position="12"/>
        <end position="14"/>
    </location>
</feature>
<feature type="helix" evidence="4">
    <location>
        <begin position="17"/>
        <end position="19"/>
    </location>
</feature>
<feature type="helix" evidence="4">
    <location>
        <begin position="20"/>
        <end position="30"/>
    </location>
</feature>
<feature type="turn" evidence="4">
    <location>
        <begin position="32"/>
        <end position="34"/>
    </location>
</feature>
<feature type="helix" evidence="4">
    <location>
        <begin position="40"/>
        <end position="45"/>
    </location>
</feature>
<feature type="helix" evidence="4">
    <location>
        <begin position="47"/>
        <end position="49"/>
    </location>
</feature>
<feature type="strand" evidence="4">
    <location>
        <begin position="50"/>
        <end position="54"/>
    </location>
</feature>
<feature type="turn" evidence="4">
    <location>
        <begin position="56"/>
        <end position="60"/>
    </location>
</feature>
<feature type="strand" evidence="4">
    <location>
        <begin position="62"/>
        <end position="72"/>
    </location>
</feature>
<feature type="strand" evidence="4">
    <location>
        <begin position="75"/>
        <end position="83"/>
    </location>
</feature>
<feature type="helix" evidence="4">
    <location>
        <begin position="85"/>
        <end position="87"/>
    </location>
</feature>
<feature type="strand" evidence="5">
    <location>
        <begin position="89"/>
        <end position="91"/>
    </location>
</feature>
<feature type="helix" evidence="4">
    <location>
        <begin position="92"/>
        <end position="106"/>
    </location>
</feature>
<feature type="strand" evidence="4">
    <location>
        <begin position="111"/>
        <end position="117"/>
    </location>
</feature>
<feature type="helix" evidence="4">
    <location>
        <begin position="119"/>
        <end position="123"/>
    </location>
</feature>
<feature type="turn" evidence="4">
    <location>
        <begin position="124"/>
        <end position="126"/>
    </location>
</feature>
<feature type="strand" evidence="5">
    <location>
        <begin position="128"/>
        <end position="130"/>
    </location>
</feature>
<feature type="helix" evidence="4">
    <location>
        <begin position="137"/>
        <end position="146"/>
    </location>
</feature>
<feature type="helix" evidence="4">
    <location>
        <begin position="149"/>
        <end position="152"/>
    </location>
</feature>
<feature type="helix" evidence="4">
    <location>
        <begin position="157"/>
        <end position="160"/>
    </location>
</feature>
<feature type="helix" evidence="5">
    <location>
        <begin position="161"/>
        <end position="164"/>
    </location>
</feature>
<feature type="strand" evidence="4">
    <location>
        <begin position="168"/>
        <end position="173"/>
    </location>
</feature>
<comment type="function">
    <text evidence="2">Catalyzes the conversion of L-glutamate to alpha-N-acetyl-L-glutamate. L-glutamine is a significantly better substrate compared to L-glutamate.</text>
</comment>
<comment type="catalytic activity">
    <reaction evidence="2">
        <text>L-glutamate + acetyl-CoA = N-acetyl-L-glutamate + CoA + H(+)</text>
        <dbReference type="Rhea" id="RHEA:24292"/>
        <dbReference type="ChEBI" id="CHEBI:15378"/>
        <dbReference type="ChEBI" id="CHEBI:29985"/>
        <dbReference type="ChEBI" id="CHEBI:44337"/>
        <dbReference type="ChEBI" id="CHEBI:57287"/>
        <dbReference type="ChEBI" id="CHEBI:57288"/>
        <dbReference type="EC" id="2.3.1.1"/>
    </reaction>
</comment>
<comment type="activity regulation">
    <text evidence="2">Inhibited by L-arginine.</text>
</comment>
<comment type="biophysicochemical properties">
    <kinetics>
        <KM evidence="2">150 mM for acetyl-CoA</KM>
        <KM evidence="2">280 mM for glutamine</KM>
    </kinetics>
</comment>
<comment type="pathway">
    <text>Amino-acid biosynthesis; L-arginine biosynthesis; N(2)-acetyl-L-ornithine from L-glutamate: step 1/4.</text>
</comment>
<comment type="subunit">
    <text evidence="2">Homodimer and homotetramer.</text>
</comment>
<comment type="mass spectrometry" mass="20978.0" method="Electrospray" evidence="2"/>
<comment type="miscellaneous">
    <text>Was identified as a high-confidence drug target.</text>
</comment>
<comment type="similarity">
    <text evidence="3">Belongs to the acetyltransferase family.</text>
</comment>
<reference key="1">
    <citation type="journal article" date="1998" name="Nature">
        <title>Deciphering the biology of Mycobacterium tuberculosis from the complete genome sequence.</title>
        <authorList>
            <person name="Cole S.T."/>
            <person name="Brosch R."/>
            <person name="Parkhill J."/>
            <person name="Garnier T."/>
            <person name="Churcher C.M."/>
            <person name="Harris D.E."/>
            <person name="Gordon S.V."/>
            <person name="Eiglmeier K."/>
            <person name="Gas S."/>
            <person name="Barry C.E. III"/>
            <person name="Tekaia F."/>
            <person name="Badcock K."/>
            <person name="Basham D."/>
            <person name="Brown D."/>
            <person name="Chillingworth T."/>
            <person name="Connor R."/>
            <person name="Davies R.M."/>
            <person name="Devlin K."/>
            <person name="Feltwell T."/>
            <person name="Gentles S."/>
            <person name="Hamlin N."/>
            <person name="Holroyd S."/>
            <person name="Hornsby T."/>
            <person name="Jagels K."/>
            <person name="Krogh A."/>
            <person name="McLean J."/>
            <person name="Moule S."/>
            <person name="Murphy L.D."/>
            <person name="Oliver S."/>
            <person name="Osborne J."/>
            <person name="Quail M.A."/>
            <person name="Rajandream M.A."/>
            <person name="Rogers J."/>
            <person name="Rutter S."/>
            <person name="Seeger K."/>
            <person name="Skelton S."/>
            <person name="Squares S."/>
            <person name="Squares R."/>
            <person name="Sulston J.E."/>
            <person name="Taylor K."/>
            <person name="Whitehead S."/>
            <person name="Barrell B.G."/>
        </authorList>
    </citation>
    <scope>NUCLEOTIDE SEQUENCE [LARGE SCALE GENOMIC DNA]</scope>
    <source>
        <strain>ATCC 25618 / H37Rv</strain>
    </source>
</reference>
<reference key="2">
    <citation type="journal article" date="2005" name="J. Bacteriol.">
        <title>Functional characterization of a novel ArgA from Mycobacterium tuberculosis.</title>
        <authorList>
            <person name="Errey J.C."/>
            <person name="Blanchard J.S."/>
        </authorList>
    </citation>
    <scope>FUNCTION</scope>
    <scope>CATALYTIC ACTIVITY</scope>
    <scope>BIOPHYSICOCHEMICAL PROPERTIES</scope>
    <scope>ACTIVITY REGULATION</scope>
    <scope>SUBSTRATE SPECIFICITY</scope>
    <scope>MASS SPECTROMETRY</scope>
    <scope>SUBUNIT</scope>
</reference>
<reference key="3">
    <citation type="journal article" date="2008" name="BMC Syst. Biol.">
        <title>targetTB: a target identification pipeline for Mycobacterium tuberculosis through an interactome, reactome and genome-scale structural analysis.</title>
        <authorList>
            <person name="Raman K."/>
            <person name="Yeturu K."/>
            <person name="Chandra N."/>
        </authorList>
    </citation>
    <scope>IDENTIFICATION AS A DRUG TARGET [LARGE SCALE ANALYSIS]</scope>
</reference>
<reference key="4">
    <citation type="journal article" date="2011" name="Mol. Cell. Proteomics">
        <title>Proteogenomic analysis of Mycobacterium tuberculosis by high resolution mass spectrometry.</title>
        <authorList>
            <person name="Kelkar D.S."/>
            <person name="Kumar D."/>
            <person name="Kumar P."/>
            <person name="Balakrishnan L."/>
            <person name="Muthusamy B."/>
            <person name="Yadav A.K."/>
            <person name="Shrivastava P."/>
            <person name="Marimuthu A."/>
            <person name="Anand S."/>
            <person name="Sundaram H."/>
            <person name="Kingsbury R."/>
            <person name="Harsha H.C."/>
            <person name="Nair B."/>
            <person name="Prasad T.S."/>
            <person name="Chauhan D.S."/>
            <person name="Katoch K."/>
            <person name="Katoch V.M."/>
            <person name="Kumar P."/>
            <person name="Chaerkady R."/>
            <person name="Ramachandran S."/>
            <person name="Dash D."/>
            <person name="Pandey A."/>
        </authorList>
    </citation>
    <scope>IDENTIFICATION BY MASS SPECTROMETRY [LARGE SCALE ANALYSIS]</scope>
    <source>
        <strain>ATCC 25618 / H37Rv</strain>
    </source>
</reference>
<protein>
    <recommendedName>
        <fullName>Amino-acid acetyltransferase</fullName>
        <ecNumber>2.3.1.1</ecNumber>
    </recommendedName>
    <alternativeName>
        <fullName>N-acetylglutamate synthase</fullName>
        <shortName>AGS</shortName>
        <shortName>NAGS</shortName>
    </alternativeName>
</protein>
<keyword id="KW-0002">3D-structure</keyword>
<keyword id="KW-0012">Acyltransferase</keyword>
<keyword id="KW-0028">Amino-acid biosynthesis</keyword>
<keyword id="KW-0055">Arginine biosynthesis</keyword>
<keyword id="KW-1185">Reference proteome</keyword>
<keyword id="KW-0808">Transferase</keyword>
<proteinExistence type="evidence at protein level"/>
<organism>
    <name type="scientific">Mycobacterium tuberculosis (strain ATCC 25618 / H37Rv)</name>
    <dbReference type="NCBI Taxonomy" id="83332"/>
    <lineage>
        <taxon>Bacteria</taxon>
        <taxon>Bacillati</taxon>
        <taxon>Actinomycetota</taxon>
        <taxon>Actinomycetes</taxon>
        <taxon>Mycobacteriales</taxon>
        <taxon>Mycobacteriaceae</taxon>
        <taxon>Mycobacterium</taxon>
        <taxon>Mycobacterium tuberculosis complex</taxon>
    </lineage>
</organism>